<proteinExistence type="inferred from homology"/>
<evidence type="ECO:0000255" key="1">
    <source>
        <dbReference type="HAMAP-Rule" id="MF_01126"/>
    </source>
</evidence>
<name>Y2074_LISW6</name>
<protein>
    <recommendedName>
        <fullName evidence="1">UPF0298 protein lwe2074</fullName>
    </recommendedName>
</protein>
<reference key="1">
    <citation type="journal article" date="2006" name="J. Bacteriol.">
        <title>Whole-genome sequence of Listeria welshimeri reveals common steps in genome reduction with Listeria innocua as compared to Listeria monocytogenes.</title>
        <authorList>
            <person name="Hain T."/>
            <person name="Steinweg C."/>
            <person name="Kuenne C.T."/>
            <person name="Billion A."/>
            <person name="Ghai R."/>
            <person name="Chatterjee S.S."/>
            <person name="Domann E."/>
            <person name="Kaerst U."/>
            <person name="Goesmann A."/>
            <person name="Bekel T."/>
            <person name="Bartels D."/>
            <person name="Kaiser O."/>
            <person name="Meyer F."/>
            <person name="Puehler A."/>
            <person name="Weisshaar B."/>
            <person name="Wehland J."/>
            <person name="Liang C."/>
            <person name="Dandekar T."/>
            <person name="Lampidis R."/>
            <person name="Kreft J."/>
            <person name="Goebel W."/>
            <person name="Chakraborty T."/>
        </authorList>
    </citation>
    <scope>NUCLEOTIDE SEQUENCE [LARGE SCALE GENOMIC DNA]</scope>
    <source>
        <strain>ATCC 35897 / DSM 20650 / CCUG 15529 / CIP 8149 / NCTC 11857 / SLCC 5334 / V8</strain>
    </source>
</reference>
<keyword id="KW-0963">Cytoplasm</keyword>
<feature type="chain" id="PRO_1000065362" description="UPF0298 protein lwe2074">
    <location>
        <begin position="1"/>
        <end position="93"/>
    </location>
</feature>
<comment type="subcellular location">
    <subcellularLocation>
        <location evidence="1">Cytoplasm</location>
    </subcellularLocation>
</comment>
<comment type="similarity">
    <text evidence="1">Belongs to the UPF0298 family.</text>
</comment>
<accession>A0AKG0</accession>
<dbReference type="EMBL" id="AM263198">
    <property type="protein sequence ID" value="CAK21492.1"/>
    <property type="molecule type" value="Genomic_DNA"/>
</dbReference>
<dbReference type="RefSeq" id="WP_011702833.1">
    <property type="nucleotide sequence ID" value="NC_008555.1"/>
</dbReference>
<dbReference type="SMR" id="A0AKG0"/>
<dbReference type="STRING" id="386043.lwe2074"/>
<dbReference type="GeneID" id="61189974"/>
<dbReference type="KEGG" id="lwe:lwe2074"/>
<dbReference type="eggNOG" id="COG4471">
    <property type="taxonomic scope" value="Bacteria"/>
</dbReference>
<dbReference type="HOGENOM" id="CLU_159890_2_0_9"/>
<dbReference type="OrthoDB" id="2990788at2"/>
<dbReference type="Proteomes" id="UP000000779">
    <property type="component" value="Chromosome"/>
</dbReference>
<dbReference type="GO" id="GO:0005737">
    <property type="term" value="C:cytoplasm"/>
    <property type="evidence" value="ECO:0007669"/>
    <property type="project" value="UniProtKB-SubCell"/>
</dbReference>
<dbReference type="HAMAP" id="MF_01126">
    <property type="entry name" value="UPF0298"/>
    <property type="match status" value="1"/>
</dbReference>
<dbReference type="InterPro" id="IPR016979">
    <property type="entry name" value="DUF2129"/>
</dbReference>
<dbReference type="NCBIfam" id="NF002777">
    <property type="entry name" value="PRK02886.1"/>
    <property type="match status" value="1"/>
</dbReference>
<dbReference type="Pfam" id="PF09902">
    <property type="entry name" value="DUF2129"/>
    <property type="match status" value="1"/>
</dbReference>
<dbReference type="PIRSF" id="PIRSF031653">
    <property type="entry name" value="UCP031653"/>
    <property type="match status" value="1"/>
</dbReference>
<organism>
    <name type="scientific">Listeria welshimeri serovar 6b (strain ATCC 35897 / DSM 20650 / CCUG 15529 / CIP 8149 / NCTC 11857 / SLCC 5334 / V8)</name>
    <dbReference type="NCBI Taxonomy" id="386043"/>
    <lineage>
        <taxon>Bacteria</taxon>
        <taxon>Bacillati</taxon>
        <taxon>Bacillota</taxon>
        <taxon>Bacilli</taxon>
        <taxon>Bacillales</taxon>
        <taxon>Listeriaceae</taxon>
        <taxon>Listeria</taxon>
    </lineage>
</organism>
<sequence>MENDRQAIVVWMNHLKQVRSLKRFGNVHYVSRKLKYAVLYCDMAEVEDISEKVSRFHYVKRVEMSFRPFLKTEYESKKEMMYEHKNEDVQISI</sequence>
<gene>
    <name type="ordered locus">lwe2074</name>
</gene>